<gene>
    <name evidence="1" type="primary">bioA</name>
    <name type="ordered locus">DVU_2559</name>
</gene>
<feature type="chain" id="PRO_0000411122" description="Adenosylmethionine-8-amino-7-oxononanoate aminotransferase">
    <location>
        <begin position="1"/>
        <end position="542"/>
    </location>
</feature>
<feature type="region of interest" description="Disordered" evidence="2">
    <location>
        <begin position="509"/>
        <end position="542"/>
    </location>
</feature>
<feature type="compositionally biased region" description="Basic and acidic residues" evidence="2">
    <location>
        <begin position="515"/>
        <end position="524"/>
    </location>
</feature>
<feature type="binding site" evidence="1">
    <location>
        <begin position="170"/>
        <end position="171"/>
    </location>
    <ligand>
        <name>pyridoxal 5'-phosphate</name>
        <dbReference type="ChEBI" id="CHEBI:597326"/>
    </ligand>
</feature>
<feature type="binding site" evidence="1">
    <location>
        <position position="205"/>
    </location>
    <ligand>
        <name>substrate</name>
    </ligand>
</feature>
<feature type="binding site" evidence="1">
    <location>
        <position position="311"/>
    </location>
    <ligand>
        <name>pyridoxal 5'-phosphate</name>
        <dbReference type="ChEBI" id="CHEBI:597326"/>
    </ligand>
</feature>
<feature type="binding site" evidence="1">
    <location>
        <position position="340"/>
    </location>
    <ligand>
        <name>substrate</name>
    </ligand>
</feature>
<feature type="binding site" evidence="1">
    <location>
        <position position="375"/>
    </location>
    <ligand>
        <name>substrate</name>
    </ligand>
</feature>
<feature type="binding site" evidence="1">
    <location>
        <position position="470"/>
    </location>
    <ligand>
        <name>substrate</name>
    </ligand>
</feature>
<feature type="site" description="Participates in the substrate recognition with KAPA and in a stacking interaction with the adenine ring of SAM" evidence="1">
    <location>
        <position position="73"/>
    </location>
</feature>
<feature type="modified residue" description="N6-(pyridoxal phosphate)lysine" evidence="1">
    <location>
        <position position="340"/>
    </location>
</feature>
<dbReference type="EC" id="2.6.1.62" evidence="1"/>
<dbReference type="EMBL" id="AE017285">
    <property type="protein sequence ID" value="AAS97031.1"/>
    <property type="molecule type" value="Genomic_DNA"/>
</dbReference>
<dbReference type="RefSeq" id="WP_010939829.1">
    <property type="nucleotide sequence ID" value="NC_002937.3"/>
</dbReference>
<dbReference type="RefSeq" id="YP_011771.1">
    <property type="nucleotide sequence ID" value="NC_002937.3"/>
</dbReference>
<dbReference type="SMR" id="Q728P4"/>
<dbReference type="STRING" id="882.DVU_2559"/>
<dbReference type="PaxDb" id="882-DVU_2559"/>
<dbReference type="EnsemblBacteria" id="AAS97031">
    <property type="protein sequence ID" value="AAS97031"/>
    <property type="gene ID" value="DVU_2559"/>
</dbReference>
<dbReference type="KEGG" id="dvu:DVU_2559"/>
<dbReference type="PATRIC" id="fig|882.5.peg.2317"/>
<dbReference type="eggNOG" id="COG0161">
    <property type="taxonomic scope" value="Bacteria"/>
</dbReference>
<dbReference type="HOGENOM" id="CLU_016922_4_3_7"/>
<dbReference type="OrthoDB" id="9801834at2"/>
<dbReference type="PhylomeDB" id="Q728P4"/>
<dbReference type="UniPathway" id="UPA00078">
    <property type="reaction ID" value="UER00160"/>
</dbReference>
<dbReference type="Proteomes" id="UP000002194">
    <property type="component" value="Chromosome"/>
</dbReference>
<dbReference type="GO" id="GO:0005737">
    <property type="term" value="C:cytoplasm"/>
    <property type="evidence" value="ECO:0007669"/>
    <property type="project" value="UniProtKB-SubCell"/>
</dbReference>
<dbReference type="GO" id="GO:0004015">
    <property type="term" value="F:adenosylmethionine-8-amino-7-oxononanoate transaminase activity"/>
    <property type="evidence" value="ECO:0007669"/>
    <property type="project" value="UniProtKB-UniRule"/>
</dbReference>
<dbReference type="GO" id="GO:0030170">
    <property type="term" value="F:pyridoxal phosphate binding"/>
    <property type="evidence" value="ECO:0007669"/>
    <property type="project" value="UniProtKB-UniRule"/>
</dbReference>
<dbReference type="GO" id="GO:0009102">
    <property type="term" value="P:biotin biosynthetic process"/>
    <property type="evidence" value="ECO:0007669"/>
    <property type="project" value="UniProtKB-UniRule"/>
</dbReference>
<dbReference type="CDD" id="cd00610">
    <property type="entry name" value="OAT_like"/>
    <property type="match status" value="1"/>
</dbReference>
<dbReference type="FunFam" id="3.40.640.10:FF:000078">
    <property type="entry name" value="Adenosylmethionine-8-amino-7-oxononanoate aminotransferase"/>
    <property type="match status" value="1"/>
</dbReference>
<dbReference type="Gene3D" id="3.90.1150.10">
    <property type="entry name" value="Aspartate Aminotransferase, domain 1"/>
    <property type="match status" value="1"/>
</dbReference>
<dbReference type="Gene3D" id="3.40.640.10">
    <property type="entry name" value="Type I PLP-dependent aspartate aminotransferase-like (Major domain)"/>
    <property type="match status" value="1"/>
</dbReference>
<dbReference type="HAMAP" id="MF_00834">
    <property type="entry name" value="BioA"/>
    <property type="match status" value="1"/>
</dbReference>
<dbReference type="InterPro" id="IPR005814">
    <property type="entry name" value="Aminotrans_3"/>
</dbReference>
<dbReference type="InterPro" id="IPR005815">
    <property type="entry name" value="BioA"/>
</dbReference>
<dbReference type="InterPro" id="IPR015424">
    <property type="entry name" value="PyrdxlP-dep_Trfase"/>
</dbReference>
<dbReference type="InterPro" id="IPR015421">
    <property type="entry name" value="PyrdxlP-dep_Trfase_major"/>
</dbReference>
<dbReference type="InterPro" id="IPR015422">
    <property type="entry name" value="PyrdxlP-dep_Trfase_small"/>
</dbReference>
<dbReference type="NCBIfam" id="TIGR00508">
    <property type="entry name" value="bioA"/>
    <property type="match status" value="1"/>
</dbReference>
<dbReference type="PANTHER" id="PTHR42684">
    <property type="entry name" value="ADENOSYLMETHIONINE-8-AMINO-7-OXONONANOATE AMINOTRANSFERASE"/>
    <property type="match status" value="1"/>
</dbReference>
<dbReference type="PANTHER" id="PTHR42684:SF17">
    <property type="entry name" value="ADENOSYLMETHIONINE-8-AMINO-7-OXONONANOATE AMINOTRANSFERASE"/>
    <property type="match status" value="1"/>
</dbReference>
<dbReference type="Pfam" id="PF00202">
    <property type="entry name" value="Aminotran_3"/>
    <property type="match status" value="1"/>
</dbReference>
<dbReference type="SUPFAM" id="SSF53383">
    <property type="entry name" value="PLP-dependent transferases"/>
    <property type="match status" value="1"/>
</dbReference>
<organism>
    <name type="scientific">Nitratidesulfovibrio vulgaris (strain ATCC 29579 / DSM 644 / CCUG 34227 / NCIMB 8303 / VKM B-1760 / Hildenborough)</name>
    <name type="common">Desulfovibrio vulgaris</name>
    <dbReference type="NCBI Taxonomy" id="882"/>
    <lineage>
        <taxon>Bacteria</taxon>
        <taxon>Pseudomonadati</taxon>
        <taxon>Thermodesulfobacteriota</taxon>
        <taxon>Desulfovibrionia</taxon>
        <taxon>Desulfovibrionales</taxon>
        <taxon>Desulfovibrionaceae</taxon>
        <taxon>Nitratidesulfovibrio</taxon>
    </lineage>
</organism>
<sequence>MSTSPFNSRVAPMPHDDATAPVLHYAHDAAGAHDAADAAGAHDAADAAGTPPCAASRTARLRSLDAAHVWHPFTQMRDWMGSEPCIIDAADGNHLIDTDGNRYLDGVSSLWTNVHGHRHPHIDEAIRRQLDRVAHSTLLGLGGTPSIELAARLTAIAPAGLTRVFYSDSGSTAVEAALKIAFQYHRQAPEGDARRTRVMAFSNAYHGDTIGSVSLGGMSLFHGIYGPLLFDPVRAPAPHCYRCPADLRPETCGMACLGEVERLMRHHGHELCAVVVEPLVQGAAGMLVQPRGWLRGLRDLCDRHGVFMVADEVAVGFGKTGTMFACEQEGVVPDMLCLAKGITGGYLPLAATLVTEHIHDGFLGGYADFRTFFHGHTYTGNALACAAALASLDVFEEERTLETLRPRIERLATLLAPLNDLPHVGDIRRVGVMTGIELVADRETRTPYRPEERIGHRVTLEARRRGVIVRPLGDVMVLMPPLSITETELETLVHTVRGAIIAVTEHGADGGLWTKRPDGPDNPDKANTPDTPDGARTGETVV</sequence>
<evidence type="ECO:0000255" key="1">
    <source>
        <dbReference type="HAMAP-Rule" id="MF_00834"/>
    </source>
</evidence>
<evidence type="ECO:0000256" key="2">
    <source>
        <dbReference type="SAM" id="MobiDB-lite"/>
    </source>
</evidence>
<accession>Q728P4</accession>
<name>BIOA_NITV2</name>
<proteinExistence type="inferred from homology"/>
<reference key="1">
    <citation type="journal article" date="2004" name="Nat. Biotechnol.">
        <title>The genome sequence of the anaerobic, sulfate-reducing bacterium Desulfovibrio vulgaris Hildenborough.</title>
        <authorList>
            <person name="Heidelberg J.F."/>
            <person name="Seshadri R."/>
            <person name="Haveman S.A."/>
            <person name="Hemme C.L."/>
            <person name="Paulsen I.T."/>
            <person name="Kolonay J.F."/>
            <person name="Eisen J.A."/>
            <person name="Ward N.L."/>
            <person name="Methe B.A."/>
            <person name="Brinkac L.M."/>
            <person name="Daugherty S.C."/>
            <person name="DeBoy R.T."/>
            <person name="Dodson R.J."/>
            <person name="Durkin A.S."/>
            <person name="Madupu R."/>
            <person name="Nelson W.C."/>
            <person name="Sullivan S.A."/>
            <person name="Fouts D.E."/>
            <person name="Haft D.H."/>
            <person name="Selengut J."/>
            <person name="Peterson J.D."/>
            <person name="Davidsen T.M."/>
            <person name="Zafar N."/>
            <person name="Zhou L."/>
            <person name="Radune D."/>
            <person name="Dimitrov G."/>
            <person name="Hance M."/>
            <person name="Tran K."/>
            <person name="Khouri H.M."/>
            <person name="Gill J."/>
            <person name="Utterback T.R."/>
            <person name="Feldblyum T.V."/>
            <person name="Wall J.D."/>
            <person name="Voordouw G."/>
            <person name="Fraser C.M."/>
        </authorList>
    </citation>
    <scope>NUCLEOTIDE SEQUENCE [LARGE SCALE GENOMIC DNA]</scope>
    <source>
        <strain>ATCC 29579 / DSM 644 / CCUG 34227 / NCIMB 8303 / VKM B-1760 / Hildenborough</strain>
    </source>
</reference>
<protein>
    <recommendedName>
        <fullName evidence="1">Adenosylmethionine-8-amino-7-oxononanoate aminotransferase</fullName>
        <ecNumber evidence="1">2.6.1.62</ecNumber>
    </recommendedName>
    <alternativeName>
        <fullName evidence="1">7,8-diamino-pelargonic acid aminotransferase</fullName>
        <shortName evidence="1">DAPA AT</shortName>
        <shortName evidence="1">DAPA aminotransferase</shortName>
    </alternativeName>
    <alternativeName>
        <fullName evidence="1">7,8-diaminononanoate synthase</fullName>
        <shortName evidence="1">DANS</shortName>
    </alternativeName>
    <alternativeName>
        <fullName evidence="1">Diaminopelargonic acid synthase</fullName>
    </alternativeName>
</protein>
<comment type="function">
    <text evidence="1">Catalyzes the transfer of the alpha-amino group from S-adenosyl-L-methionine (SAM) to 7-keto-8-aminopelargonic acid (KAPA) to form 7,8-diaminopelargonic acid (DAPA). It is the only aminotransferase known to utilize SAM as an amino donor.</text>
</comment>
<comment type="catalytic activity">
    <reaction evidence="1">
        <text>(8S)-8-amino-7-oxononanoate + S-adenosyl-L-methionine = S-adenosyl-4-methylsulfanyl-2-oxobutanoate + (7R,8S)-7,8-diammoniononanoate</text>
        <dbReference type="Rhea" id="RHEA:16861"/>
        <dbReference type="ChEBI" id="CHEBI:16490"/>
        <dbReference type="ChEBI" id="CHEBI:59789"/>
        <dbReference type="ChEBI" id="CHEBI:149468"/>
        <dbReference type="ChEBI" id="CHEBI:149469"/>
        <dbReference type="EC" id="2.6.1.62"/>
    </reaction>
</comment>
<comment type="cofactor">
    <cofactor evidence="1">
        <name>pyridoxal 5'-phosphate</name>
        <dbReference type="ChEBI" id="CHEBI:597326"/>
    </cofactor>
</comment>
<comment type="pathway">
    <text evidence="1">Cofactor biosynthesis; biotin biosynthesis; 7,8-diaminononanoate from 8-amino-7-oxononanoate (SAM route): step 1/1.</text>
</comment>
<comment type="subunit">
    <text evidence="1">Homodimer.</text>
</comment>
<comment type="subcellular location">
    <subcellularLocation>
        <location evidence="1">Cytoplasm</location>
    </subcellularLocation>
</comment>
<comment type="similarity">
    <text evidence="1">Belongs to the class-III pyridoxal-phosphate-dependent aminotransferase family. BioA subfamily.</text>
</comment>
<keyword id="KW-0032">Aminotransferase</keyword>
<keyword id="KW-0093">Biotin biosynthesis</keyword>
<keyword id="KW-0963">Cytoplasm</keyword>
<keyword id="KW-0663">Pyridoxal phosphate</keyword>
<keyword id="KW-1185">Reference proteome</keyword>
<keyword id="KW-0949">S-adenosyl-L-methionine</keyword>
<keyword id="KW-0808">Transferase</keyword>